<feature type="chain" id="PRO_0000190778" description="XK-related protein 4">
    <location>
        <begin position="1"/>
        <end position="647"/>
    </location>
</feature>
<feature type="chain" id="PRO_0000453290" description="XK-related protein 4, processed form" evidence="7">
    <location>
        <begin position="1"/>
        <end position="564"/>
    </location>
</feature>
<feature type="transmembrane region" description="Helical" evidence="1">
    <location>
        <begin position="112"/>
        <end position="132"/>
    </location>
</feature>
<feature type="transmembrane region" description="Helical" evidence="1">
    <location>
        <begin position="142"/>
        <end position="162"/>
    </location>
</feature>
<feature type="transmembrane region" description="Helical" evidence="1">
    <location>
        <begin position="245"/>
        <end position="265"/>
    </location>
</feature>
<feature type="transmembrane region" description="Helical" evidence="1">
    <location>
        <begin position="303"/>
        <end position="323"/>
    </location>
</feature>
<feature type="transmembrane region" description="Helical" evidence="1">
    <location>
        <begin position="328"/>
        <end position="348"/>
    </location>
</feature>
<feature type="transmembrane region" description="Helical" evidence="1">
    <location>
        <begin position="362"/>
        <end position="382"/>
    </location>
</feature>
<feature type="transmembrane region" description="Helical" evidence="1">
    <location>
        <begin position="393"/>
        <end position="415"/>
    </location>
</feature>
<feature type="transmembrane region" description="Helical" evidence="1">
    <location>
        <begin position="425"/>
        <end position="445"/>
    </location>
</feature>
<feature type="transmembrane region" description="Helical" evidence="1">
    <location>
        <begin position="454"/>
        <end position="474"/>
    </location>
</feature>
<feature type="transmembrane region" description="Helical" evidence="1">
    <location>
        <begin position="484"/>
        <end position="504"/>
    </location>
</feature>
<feature type="region of interest" description="Disordered" evidence="2">
    <location>
        <begin position="1"/>
        <end position="44"/>
    </location>
</feature>
<feature type="region of interest" description="Disordered" evidence="2">
    <location>
        <begin position="197"/>
        <end position="238"/>
    </location>
</feature>
<feature type="compositionally biased region" description="Basic and acidic residues" evidence="2">
    <location>
        <begin position="1"/>
        <end position="15"/>
    </location>
</feature>
<feature type="compositionally biased region" description="Polar residues" evidence="2">
    <location>
        <begin position="21"/>
        <end position="31"/>
    </location>
</feature>
<feature type="compositionally biased region" description="Polar residues" evidence="2">
    <location>
        <begin position="207"/>
        <end position="236"/>
    </location>
</feature>
<feature type="site" description="Cleavage; by caspase-3, caspase-6 and caspase-7" evidence="7">
    <location>
        <begin position="564"/>
        <end position="565"/>
    </location>
</feature>
<feature type="modified residue" description="Phosphoserine" evidence="10">
    <location>
        <position position="197"/>
    </location>
</feature>
<feature type="mutagenesis site" description="Displays constitutive phospholipid scramblase activity." evidence="4">
    <original>I</original>
    <variation>S</variation>
    <location>
        <position position="322"/>
    </location>
</feature>
<feature type="mutagenesis site" description="Displays constitutive phospholipid scramblase activity." evidence="4">
    <original>L</original>
    <variation>F</variation>
    <location>
        <position position="331"/>
    </location>
</feature>
<feature type="mutagenesis site" description="Displays constitutive phospholipid scramblase activity." evidence="4">
    <original>Q</original>
    <variation>E</variation>
    <location>
        <position position="332"/>
    </location>
</feature>
<feature type="mutagenesis site" description="In 1DA mutant; abolished cleavage by caspase, preventing phospholipid scramblase activity." evidence="3">
    <original>D</original>
    <variation>A</variation>
    <location>
        <position position="564"/>
    </location>
</feature>
<gene>
    <name evidence="9" type="primary">Xkr4</name>
    <name evidence="5" type="synonym">Xrg4</name>
</gene>
<organism>
    <name type="scientific">Mus musculus</name>
    <name type="common">Mouse</name>
    <dbReference type="NCBI Taxonomy" id="10090"/>
    <lineage>
        <taxon>Eukaryota</taxon>
        <taxon>Metazoa</taxon>
        <taxon>Chordata</taxon>
        <taxon>Craniata</taxon>
        <taxon>Vertebrata</taxon>
        <taxon>Euteleostomi</taxon>
        <taxon>Mammalia</taxon>
        <taxon>Eutheria</taxon>
        <taxon>Euarchontoglires</taxon>
        <taxon>Glires</taxon>
        <taxon>Rodentia</taxon>
        <taxon>Myomorpha</taxon>
        <taxon>Muroidea</taxon>
        <taxon>Muridae</taxon>
        <taxon>Murinae</taxon>
        <taxon>Mus</taxon>
        <taxon>Mus</taxon>
    </lineage>
</organism>
<name>XKR4_MOUSE</name>
<evidence type="ECO:0000255" key="1"/>
<evidence type="ECO:0000256" key="2">
    <source>
        <dbReference type="SAM" id="MobiDB-lite"/>
    </source>
</evidence>
<evidence type="ECO:0000269" key="3">
    <source>
    </source>
</evidence>
<evidence type="ECO:0000269" key="4">
    <source>
    </source>
</evidence>
<evidence type="ECO:0000303" key="5">
    <source ref="1"/>
</evidence>
<evidence type="ECO:0000305" key="6"/>
<evidence type="ECO:0000305" key="7">
    <source>
    </source>
</evidence>
<evidence type="ECO:0000305" key="8">
    <source>
    </source>
</evidence>
<evidence type="ECO:0000312" key="9">
    <source>
        <dbReference type="MGI" id="MGI:3528744"/>
    </source>
</evidence>
<evidence type="ECO:0007744" key="10">
    <source>
    </source>
</evidence>
<protein>
    <recommendedName>
        <fullName evidence="6">XK-related protein 4</fullName>
    </recommendedName>
    <component>
        <recommendedName>
            <fullName evidence="7">XK-related protein 4, processed form</fullName>
        </recommendedName>
    </component>
</protein>
<comment type="function">
    <molecule>XK-related protein 4, processed form</molecule>
    <text evidence="3 4">Phospholipid scramblase that promotes phosphatidylserine exposure on apoptotic cell surface (PubMed:25231987, PubMed:33725486). Phosphatidylserine is a specific marker only present at the surface of apoptotic cells and acts as a specific signal for engulfment (PubMed:25231987, PubMed:33725486).</text>
</comment>
<comment type="catalytic activity">
    <molecule>XK-related protein 4, processed form</molecule>
    <reaction evidence="7 8">
        <text>a 1,2-diacyl-sn-glycero-3-phospho-L-serine(in) = a 1,2-diacyl-sn-glycero-3-phospho-L-serine(out)</text>
        <dbReference type="Rhea" id="RHEA:38663"/>
        <dbReference type="ChEBI" id="CHEBI:57262"/>
    </reaction>
</comment>
<comment type="activity regulation">
    <text evidence="3 4">Phospholipid scramblase activity is activated upon caspase cleavage to generate the XK-related protein 4, processed form (PubMed:25231987, PubMed:33725486). Does not act prior the onset of apoptosis (PubMed:25231987).</text>
</comment>
<comment type="activity regulation">
    <molecule>XK-related protein 4, processed form</molecule>
    <text evidence="4">Homodimerizes upon caspase cleavage (PubMed:33725486). Phospholipid scramblase activity is activated following interaction with the processed C-terminus of XRCC4 (protein XRCC4, C-terminus) (PubMed:33725486).</text>
</comment>
<comment type="subunit">
    <molecule>XK-related protein 4, processed form</molecule>
    <text evidence="4">Homodimer; homodimerization takes place upon caspase cleavage (PubMed:33725486). Interacts with the processed C-terminus of XRCC4 (protein XRCC4, C-terminus); interaction promotes the phospholipid scramblase activity (PubMed:33725486).</text>
</comment>
<comment type="subcellular location">
    <subcellularLocation>
        <location evidence="3">Cell membrane</location>
        <topology evidence="1">Multi-pass membrane protein</topology>
    </subcellularLocation>
</comment>
<comment type="tissue specificity">
    <text evidence="3">Highly expressed in expressed in the brain; weakly expressed in the spleen, thymus, uterus, blood vessels and fetus.</text>
</comment>
<comment type="PTM">
    <molecule>XK-related protein 4, processed form</molecule>
    <text evidence="3">Undergoes proteolytic processing by caspase-3 (CASP3), caspase-6 (CASP6) and caspase-7 (CASP7) to generate the XK-related protein 4, processed form, leading to its activation.</text>
</comment>
<comment type="similarity">
    <text evidence="6">Belongs to the XK family.</text>
</comment>
<proteinExistence type="evidence at protein level"/>
<sequence length="647" mass="71503">MAAKSDGRLKMKKSSDVAFTPLQNSDNSGSVQGLAPGLPSGSGAEDTEAAGGGCCPDGGGCSRCCCCCAGSGGSAGSGGSGGGGRGSGAGSAALCLRLGREQRRYSLWDCLWILAAVAVYFADVGTDIWLAVDYYLRGQRWWFGLTLFFVVLGSLSVQVFSFRWFVHDFSTEDSSTTTTSSCQQPGADCKTVVSSGSAAGEGEVRPSTPQRQASNASKSNIAATNSGSNSNGATRTSGKHRSASCSFCIWLLQSLIHILQLGQIWRYLHTIYLGIRSRQSGESGRWRFYWKMVYEYADVSMLHLLATFLESAPQLVLQLCIIVQTHSLQALQGFTAAASLVSLAWALASYQKALRDSRDDKKPISYMAVIIQFCWHFFTIAARVITFALFASVFQLYFGIFIVLHWCIMTFWIVHCETEFCITKWEEIVFDMVVGIIYIFSWFNVKEGRTRCRLFIYYFVILLENTALSALWYLYKAPQIADAFAIPALCVVFSSFLTGVVFMLMYYAFFHPNGPRFGQSPSCACDDPATAFSLPPEVATSTLRSISNNRSVASDRDQKFAERDGCVPVFQVRPTAPPTPSSRPPRIEESVIKIDLFRNRYPAWERHVLDRSLRKAILAFECSPSPPRLQYKDDALIQERLEYETTL</sequence>
<keyword id="KW-0053">Apoptosis</keyword>
<keyword id="KW-1003">Cell membrane</keyword>
<keyword id="KW-0472">Membrane</keyword>
<keyword id="KW-0597">Phosphoprotein</keyword>
<keyword id="KW-1185">Reference proteome</keyword>
<keyword id="KW-0812">Transmembrane</keyword>
<keyword id="KW-1133">Transmembrane helix</keyword>
<accession>Q5GH67</accession>
<reference key="1">
    <citation type="submission" date="2004-01" db="EMBL/GenBank/DDBJ databases">
        <title>A superfamily of XK-related genes (XRG) widely expressed in vertebrates and invertebrates.</title>
        <authorList>
            <person name="Huang C.-H."/>
            <person name="Chen Y."/>
        </authorList>
    </citation>
    <scope>NUCLEOTIDE SEQUENCE [MRNA]</scope>
    <source>
        <strain>C57BL/6J</strain>
    </source>
</reference>
<reference key="2">
    <citation type="journal article" date="2007" name="Mol. Cell. Proteomics">
        <title>Qualitative and quantitative analyses of protein phosphorylation in naive and stimulated mouse synaptosomal preparations.</title>
        <authorList>
            <person name="Munton R.P."/>
            <person name="Tweedie-Cullen R."/>
            <person name="Livingstone-Zatchej M."/>
            <person name="Weinandy F."/>
            <person name="Waidelich M."/>
            <person name="Longo D."/>
            <person name="Gehrig P."/>
            <person name="Potthast F."/>
            <person name="Rutishauser D."/>
            <person name="Gerrits B."/>
            <person name="Panse C."/>
            <person name="Schlapbach R."/>
            <person name="Mansuy I.M."/>
        </authorList>
    </citation>
    <scope>IDENTIFICATION BY MASS SPECTROMETRY [LARGE SCALE ANALYSIS]</scope>
    <source>
        <tissue>Brain cortex</tissue>
    </source>
</reference>
<reference key="3">
    <citation type="journal article" date="2010" name="Cell">
        <title>A tissue-specific atlas of mouse protein phosphorylation and expression.</title>
        <authorList>
            <person name="Huttlin E.L."/>
            <person name="Jedrychowski M.P."/>
            <person name="Elias J.E."/>
            <person name="Goswami T."/>
            <person name="Rad R."/>
            <person name="Beausoleil S.A."/>
            <person name="Villen J."/>
            <person name="Haas W."/>
            <person name="Sowa M.E."/>
            <person name="Gygi S.P."/>
        </authorList>
    </citation>
    <scope>PHOSPHORYLATION [LARGE SCALE ANALYSIS] AT SER-197</scope>
    <scope>IDENTIFICATION BY MASS SPECTROMETRY [LARGE SCALE ANALYSIS]</scope>
    <source>
        <tissue>Brain</tissue>
    </source>
</reference>
<reference key="4">
    <citation type="journal article" date="2014" name="J. Biol. Chem.">
        <title>Exposure of phosphatidylserine by Xk-related protein family members during apoptosis.</title>
        <authorList>
            <person name="Suzuki J."/>
            <person name="Imanishi E."/>
            <person name="Nagata S."/>
        </authorList>
    </citation>
    <scope>FUNCTION</scope>
    <scope>CATALYTIC ACTIVITY</scope>
    <scope>ACTIVITY REGULATION</scope>
    <scope>SUBCELLULAR LOCATION</scope>
    <scope>PROTEOLYTIC CLEAVAGE</scope>
    <scope>TISSUE SPECIFICITY</scope>
    <scope>MUTAGENESIS OF ASP-564</scope>
</reference>
<reference key="5">
    <citation type="journal article" date="2021" name="Mol. Cell">
        <title>Caspase cleavage releases a nuclear protein fragment that stimulates phospholipid scrambling at the plasma membrane.</title>
        <authorList>
            <person name="Maruoka M."/>
            <person name="Zhang P."/>
            <person name="Mori H."/>
            <person name="Imanishi E."/>
            <person name="Packwood D.M."/>
            <person name="Harada H."/>
            <person name="Kosako H."/>
            <person name="Suzuki J."/>
        </authorList>
    </citation>
    <scope>FUNCTION</scope>
    <scope>CATALYTIC ACTIVITY</scope>
    <scope>ACTIVITY REGULATION</scope>
    <scope>SUBUNIT</scope>
    <scope>INTERACTION WITH XRCC4</scope>
    <scope>MUTAGENESIS OF ILE-322; LEU-331 AND GLN-332</scope>
</reference>
<dbReference type="EMBL" id="AY534250">
    <property type="protein sequence ID" value="AAT07099.1"/>
    <property type="molecule type" value="mRNA"/>
</dbReference>
<dbReference type="CCDS" id="CCDS14803.1"/>
<dbReference type="RefSeq" id="NP_001011874.1">
    <property type="nucleotide sequence ID" value="NM_001011874.1"/>
</dbReference>
<dbReference type="RefSeq" id="XP_006495613.1">
    <property type="nucleotide sequence ID" value="XM_006495550.5"/>
</dbReference>
<dbReference type="SMR" id="Q5GH67"/>
<dbReference type="BioGRID" id="243470">
    <property type="interactions" value="1"/>
</dbReference>
<dbReference type="FunCoup" id="Q5GH67">
    <property type="interactions" value="860"/>
</dbReference>
<dbReference type="STRING" id="10090.ENSMUSP00000070648"/>
<dbReference type="GlyGen" id="Q5GH67">
    <property type="glycosylation" value="1 site"/>
</dbReference>
<dbReference type="iPTMnet" id="Q5GH67"/>
<dbReference type="PhosphoSitePlus" id="Q5GH67"/>
<dbReference type="SwissPalm" id="Q5GH67"/>
<dbReference type="PaxDb" id="10090-ENSMUSP00000070648"/>
<dbReference type="PeptideAtlas" id="Q5GH67"/>
<dbReference type="ProteomicsDB" id="300185"/>
<dbReference type="Antibodypedia" id="11703">
    <property type="antibodies" value="84 antibodies from 17 providers"/>
</dbReference>
<dbReference type="DNASU" id="497097"/>
<dbReference type="Ensembl" id="ENSMUST00000070533.5">
    <property type="protein sequence ID" value="ENSMUSP00000070648.5"/>
    <property type="gene ID" value="ENSMUSG00000051951.6"/>
</dbReference>
<dbReference type="GeneID" id="497097"/>
<dbReference type="KEGG" id="mmu:497097"/>
<dbReference type="UCSC" id="uc007aeu.1">
    <property type="organism name" value="mouse"/>
</dbReference>
<dbReference type="AGR" id="MGI:3528744"/>
<dbReference type="CTD" id="114786"/>
<dbReference type="MGI" id="MGI:3528744">
    <property type="gene designation" value="Xkr4"/>
</dbReference>
<dbReference type="VEuPathDB" id="HostDB:ENSMUSG00000051951"/>
<dbReference type="eggNOG" id="KOG4790">
    <property type="taxonomic scope" value="Eukaryota"/>
</dbReference>
<dbReference type="GeneTree" id="ENSGT01110000267146"/>
<dbReference type="HOGENOM" id="CLU_028534_1_0_1"/>
<dbReference type="InParanoid" id="Q5GH67"/>
<dbReference type="OMA" id="CQQPGAD"/>
<dbReference type="OrthoDB" id="6356248at2759"/>
<dbReference type="PhylomeDB" id="Q5GH67"/>
<dbReference type="TreeFam" id="TF316454"/>
<dbReference type="BioGRID-ORCS" id="497097">
    <property type="hits" value="3 hits in 78 CRISPR screens"/>
</dbReference>
<dbReference type="ChiTaRS" id="Xkr4">
    <property type="organism name" value="mouse"/>
</dbReference>
<dbReference type="PRO" id="PR:Q5GH67"/>
<dbReference type="Proteomes" id="UP000000589">
    <property type="component" value="Chromosome 1"/>
</dbReference>
<dbReference type="RNAct" id="Q5GH67">
    <property type="molecule type" value="protein"/>
</dbReference>
<dbReference type="Bgee" id="ENSMUSG00000051951">
    <property type="expression patterns" value="Expressed in dentate gyrus of hippocampal formation granule cell and 32 other cell types or tissues"/>
</dbReference>
<dbReference type="GO" id="GO:0005886">
    <property type="term" value="C:plasma membrane"/>
    <property type="evidence" value="ECO:0000314"/>
    <property type="project" value="UniProtKB"/>
</dbReference>
<dbReference type="GO" id="GO:0006915">
    <property type="term" value="P:apoptotic process"/>
    <property type="evidence" value="ECO:0007669"/>
    <property type="project" value="UniProtKB-KW"/>
</dbReference>
<dbReference type="InterPro" id="IPR018629">
    <property type="entry name" value="XK-rel"/>
</dbReference>
<dbReference type="InterPro" id="IPR050895">
    <property type="entry name" value="XK-related_scramblase"/>
</dbReference>
<dbReference type="PANTHER" id="PTHR16024">
    <property type="entry name" value="XK-RELATED PROTEIN"/>
    <property type="match status" value="1"/>
</dbReference>
<dbReference type="PANTHER" id="PTHR16024:SF16">
    <property type="entry name" value="XK-RELATED PROTEIN 4"/>
    <property type="match status" value="1"/>
</dbReference>
<dbReference type="Pfam" id="PF09815">
    <property type="entry name" value="XK-related"/>
    <property type="match status" value="1"/>
</dbReference>